<name>GHRA_SALDC</name>
<reference key="1">
    <citation type="journal article" date="2011" name="J. Bacteriol.">
        <title>Comparative genomics of 28 Salmonella enterica isolates: evidence for CRISPR-mediated adaptive sublineage evolution.</title>
        <authorList>
            <person name="Fricke W.F."/>
            <person name="Mammel M.K."/>
            <person name="McDermott P.F."/>
            <person name="Tartera C."/>
            <person name="White D.G."/>
            <person name="Leclerc J.E."/>
            <person name="Ravel J."/>
            <person name="Cebula T.A."/>
        </authorList>
    </citation>
    <scope>NUCLEOTIDE SEQUENCE [LARGE SCALE GENOMIC DNA]</scope>
    <source>
        <strain>CT_02021853</strain>
    </source>
</reference>
<evidence type="ECO:0000255" key="1">
    <source>
        <dbReference type="HAMAP-Rule" id="MF_01666"/>
    </source>
</evidence>
<gene>
    <name evidence="1" type="primary">ghrA</name>
    <name type="ordered locus">SeD_A2239</name>
</gene>
<keyword id="KW-0963">Cytoplasm</keyword>
<keyword id="KW-0520">NAD</keyword>
<keyword id="KW-0521">NADP</keyword>
<keyword id="KW-0560">Oxidoreductase</keyword>
<organism>
    <name type="scientific">Salmonella dublin (strain CT_02021853)</name>
    <dbReference type="NCBI Taxonomy" id="439851"/>
    <lineage>
        <taxon>Bacteria</taxon>
        <taxon>Pseudomonadati</taxon>
        <taxon>Pseudomonadota</taxon>
        <taxon>Gammaproteobacteria</taxon>
        <taxon>Enterobacterales</taxon>
        <taxon>Enterobacteriaceae</taxon>
        <taxon>Salmonella</taxon>
    </lineage>
</organism>
<sequence length="312" mass="34945">MEIIFYHPTFNAAWWVNALEKALPHARVREWKVGDNNPADYALVWQPPVEMLAGRRLKAVFALGAGGDAILSKLNAHPEMLDASIPLFRLEDTGMGLQMQEYAVSQVLHWFRRFDDYQALKNQALWKPLPEYTREEFSVGIMGAGVLGAKVAESLQAWGFPLRCWSRSRKSWPGVESYVGREELHAFLNQTRVLINLLPNTAQTVGIINSELLDQLPDGAYVLNLARGVHVQEADLLAALDSGKLKGAMLDVFSQEPLPQESPLWRHPRVAMTPHIAAVTRPAEAIDYISRTITQLEKGEPVTGQVDRARGY</sequence>
<feature type="chain" id="PRO_1000187274" description="Glyoxylate/hydroxypyruvate reductase A">
    <location>
        <begin position="1"/>
        <end position="312"/>
    </location>
</feature>
<feature type="active site" evidence="1">
    <location>
        <position position="227"/>
    </location>
</feature>
<feature type="active site" description="Proton donor" evidence="1">
    <location>
        <position position="275"/>
    </location>
</feature>
<protein>
    <recommendedName>
        <fullName evidence="1">Glyoxylate/hydroxypyruvate reductase A</fullName>
        <ecNumber evidence="1">1.1.1.79</ecNumber>
        <ecNumber evidence="1">1.1.1.81</ecNumber>
    </recommendedName>
    <alternativeName>
        <fullName evidence="1">2-ketoacid reductase</fullName>
    </alternativeName>
</protein>
<accession>B5FL30</accession>
<dbReference type="EC" id="1.1.1.79" evidence="1"/>
<dbReference type="EC" id="1.1.1.81" evidence="1"/>
<dbReference type="EMBL" id="CP001144">
    <property type="protein sequence ID" value="ACH76658.1"/>
    <property type="molecule type" value="Genomic_DNA"/>
</dbReference>
<dbReference type="RefSeq" id="WP_000402545.1">
    <property type="nucleotide sequence ID" value="NC_011205.1"/>
</dbReference>
<dbReference type="SMR" id="B5FL30"/>
<dbReference type="KEGG" id="sed:SeD_A2239"/>
<dbReference type="HOGENOM" id="CLU_019796_1_0_6"/>
<dbReference type="Proteomes" id="UP000008322">
    <property type="component" value="Chromosome"/>
</dbReference>
<dbReference type="GO" id="GO:0005737">
    <property type="term" value="C:cytoplasm"/>
    <property type="evidence" value="ECO:0007669"/>
    <property type="project" value="UniProtKB-SubCell"/>
</dbReference>
<dbReference type="GO" id="GO:0030267">
    <property type="term" value="F:glyoxylate reductase (NADPH) activity"/>
    <property type="evidence" value="ECO:0007669"/>
    <property type="project" value="UniProtKB-UniRule"/>
</dbReference>
<dbReference type="GO" id="GO:0008465">
    <property type="term" value="F:hydroxypyruvate reductase (NADH) activity"/>
    <property type="evidence" value="ECO:0007669"/>
    <property type="project" value="RHEA"/>
</dbReference>
<dbReference type="GO" id="GO:0120509">
    <property type="term" value="F:hydroxypyruvate reductase (NADPH) activity"/>
    <property type="evidence" value="ECO:0007669"/>
    <property type="project" value="RHEA"/>
</dbReference>
<dbReference type="GO" id="GO:0051287">
    <property type="term" value="F:NAD binding"/>
    <property type="evidence" value="ECO:0007669"/>
    <property type="project" value="InterPro"/>
</dbReference>
<dbReference type="CDD" id="cd12164">
    <property type="entry name" value="GDH_like_2"/>
    <property type="match status" value="1"/>
</dbReference>
<dbReference type="FunFam" id="3.40.50.720:FF:000110">
    <property type="entry name" value="Glyoxylate/hydroxypyruvate reductase A"/>
    <property type="match status" value="1"/>
</dbReference>
<dbReference type="Gene3D" id="3.40.50.720">
    <property type="entry name" value="NAD(P)-binding Rossmann-like Domain"/>
    <property type="match status" value="2"/>
</dbReference>
<dbReference type="HAMAP" id="MF_01666">
    <property type="entry name" value="2_Hacid_dh_C_GhrA"/>
    <property type="match status" value="1"/>
</dbReference>
<dbReference type="InterPro" id="IPR006140">
    <property type="entry name" value="D-isomer_DH_NAD-bd"/>
</dbReference>
<dbReference type="InterPro" id="IPR023514">
    <property type="entry name" value="GhrA_Enterobacterales"/>
</dbReference>
<dbReference type="InterPro" id="IPR036291">
    <property type="entry name" value="NAD(P)-bd_dom_sf"/>
</dbReference>
<dbReference type="NCBIfam" id="NF012013">
    <property type="entry name" value="PRK15469.1"/>
    <property type="match status" value="1"/>
</dbReference>
<dbReference type="PANTHER" id="PTHR43333">
    <property type="entry name" value="2-HACID_DH_C DOMAIN-CONTAINING PROTEIN"/>
    <property type="match status" value="1"/>
</dbReference>
<dbReference type="PANTHER" id="PTHR43333:SF1">
    <property type="entry name" value="D-ISOMER SPECIFIC 2-HYDROXYACID DEHYDROGENASE NAD-BINDING DOMAIN-CONTAINING PROTEIN"/>
    <property type="match status" value="1"/>
</dbReference>
<dbReference type="Pfam" id="PF02826">
    <property type="entry name" value="2-Hacid_dh_C"/>
    <property type="match status" value="1"/>
</dbReference>
<dbReference type="SUPFAM" id="SSF51735">
    <property type="entry name" value="NAD(P)-binding Rossmann-fold domains"/>
    <property type="match status" value="1"/>
</dbReference>
<proteinExistence type="inferred from homology"/>
<comment type="function">
    <text evidence="1">Catalyzes the NADPH-dependent reduction of glyoxylate and hydroxypyruvate into glycolate and glycerate, respectively.</text>
</comment>
<comment type="catalytic activity">
    <reaction evidence="1">
        <text>glycolate + NADP(+) = glyoxylate + NADPH + H(+)</text>
        <dbReference type="Rhea" id="RHEA:10992"/>
        <dbReference type="ChEBI" id="CHEBI:15378"/>
        <dbReference type="ChEBI" id="CHEBI:29805"/>
        <dbReference type="ChEBI" id="CHEBI:36655"/>
        <dbReference type="ChEBI" id="CHEBI:57783"/>
        <dbReference type="ChEBI" id="CHEBI:58349"/>
        <dbReference type="EC" id="1.1.1.79"/>
    </reaction>
</comment>
<comment type="catalytic activity">
    <reaction evidence="1">
        <text>(R)-glycerate + NAD(+) = 3-hydroxypyruvate + NADH + H(+)</text>
        <dbReference type="Rhea" id="RHEA:17905"/>
        <dbReference type="ChEBI" id="CHEBI:15378"/>
        <dbReference type="ChEBI" id="CHEBI:16659"/>
        <dbReference type="ChEBI" id="CHEBI:17180"/>
        <dbReference type="ChEBI" id="CHEBI:57540"/>
        <dbReference type="ChEBI" id="CHEBI:57945"/>
        <dbReference type="EC" id="1.1.1.81"/>
    </reaction>
</comment>
<comment type="catalytic activity">
    <reaction evidence="1">
        <text>(R)-glycerate + NADP(+) = 3-hydroxypyruvate + NADPH + H(+)</text>
        <dbReference type="Rhea" id="RHEA:18657"/>
        <dbReference type="ChEBI" id="CHEBI:15378"/>
        <dbReference type="ChEBI" id="CHEBI:16659"/>
        <dbReference type="ChEBI" id="CHEBI:17180"/>
        <dbReference type="ChEBI" id="CHEBI:57783"/>
        <dbReference type="ChEBI" id="CHEBI:58349"/>
        <dbReference type="EC" id="1.1.1.81"/>
    </reaction>
</comment>
<comment type="subcellular location">
    <subcellularLocation>
        <location evidence="1">Cytoplasm</location>
    </subcellularLocation>
</comment>
<comment type="similarity">
    <text evidence="1">Belongs to the D-isomer specific 2-hydroxyacid dehydrogenase family. GhrA subfamily.</text>
</comment>